<protein>
    <recommendedName>
        <fullName evidence="1">Serine hydroxymethyltransferase</fullName>
        <shortName evidence="1">SHMT</shortName>
        <shortName evidence="1">Serine methylase</shortName>
        <ecNumber evidence="1">2.1.2.1</ecNumber>
    </recommendedName>
</protein>
<comment type="function">
    <text evidence="1">Catalyzes the reversible interconversion of serine and glycine with tetrahydrofolate (THF) serving as the one-carbon carrier. This reaction serves as the major source of one-carbon groups required for the biosynthesis of purines, thymidylate, methionine, and other important biomolecules. Also exhibits THF-independent aldolase activity toward beta-hydroxyamino acids, producing glycine and aldehydes, via a retro-aldol mechanism.</text>
</comment>
<comment type="catalytic activity">
    <reaction evidence="1">
        <text>(6R)-5,10-methylene-5,6,7,8-tetrahydrofolate + glycine + H2O = (6S)-5,6,7,8-tetrahydrofolate + L-serine</text>
        <dbReference type="Rhea" id="RHEA:15481"/>
        <dbReference type="ChEBI" id="CHEBI:15377"/>
        <dbReference type="ChEBI" id="CHEBI:15636"/>
        <dbReference type="ChEBI" id="CHEBI:33384"/>
        <dbReference type="ChEBI" id="CHEBI:57305"/>
        <dbReference type="ChEBI" id="CHEBI:57453"/>
        <dbReference type="EC" id="2.1.2.1"/>
    </reaction>
</comment>
<comment type="cofactor">
    <cofactor evidence="1">
        <name>pyridoxal 5'-phosphate</name>
        <dbReference type="ChEBI" id="CHEBI:597326"/>
    </cofactor>
</comment>
<comment type="pathway">
    <text evidence="1">One-carbon metabolism; tetrahydrofolate interconversion.</text>
</comment>
<comment type="pathway">
    <text evidence="1">Amino-acid biosynthesis; glycine biosynthesis; glycine from L-serine: step 1/1.</text>
</comment>
<comment type="subunit">
    <text evidence="1">Homodimer.</text>
</comment>
<comment type="subcellular location">
    <subcellularLocation>
        <location evidence="1">Cytoplasm</location>
    </subcellularLocation>
</comment>
<comment type="similarity">
    <text evidence="1">Belongs to the SHMT family.</text>
</comment>
<dbReference type="EC" id="2.1.2.1" evidence="1"/>
<dbReference type="EMBL" id="FM180568">
    <property type="protein sequence ID" value="CAS10376.1"/>
    <property type="molecule type" value="Genomic_DNA"/>
</dbReference>
<dbReference type="RefSeq" id="WP_000919159.1">
    <property type="nucleotide sequence ID" value="NC_011601.1"/>
</dbReference>
<dbReference type="SMR" id="B7UGZ1"/>
<dbReference type="GeneID" id="89517346"/>
<dbReference type="KEGG" id="ecg:E2348C_2828"/>
<dbReference type="HOGENOM" id="CLU_022477_2_1_6"/>
<dbReference type="UniPathway" id="UPA00193"/>
<dbReference type="UniPathway" id="UPA00288">
    <property type="reaction ID" value="UER01023"/>
</dbReference>
<dbReference type="Proteomes" id="UP000008205">
    <property type="component" value="Chromosome"/>
</dbReference>
<dbReference type="GO" id="GO:0005829">
    <property type="term" value="C:cytosol"/>
    <property type="evidence" value="ECO:0007669"/>
    <property type="project" value="TreeGrafter"/>
</dbReference>
<dbReference type="GO" id="GO:0004372">
    <property type="term" value="F:glycine hydroxymethyltransferase activity"/>
    <property type="evidence" value="ECO:0007669"/>
    <property type="project" value="UniProtKB-UniRule"/>
</dbReference>
<dbReference type="GO" id="GO:0030170">
    <property type="term" value="F:pyridoxal phosphate binding"/>
    <property type="evidence" value="ECO:0007669"/>
    <property type="project" value="UniProtKB-UniRule"/>
</dbReference>
<dbReference type="GO" id="GO:0019264">
    <property type="term" value="P:glycine biosynthetic process from serine"/>
    <property type="evidence" value="ECO:0007669"/>
    <property type="project" value="UniProtKB-UniRule"/>
</dbReference>
<dbReference type="GO" id="GO:0035999">
    <property type="term" value="P:tetrahydrofolate interconversion"/>
    <property type="evidence" value="ECO:0007669"/>
    <property type="project" value="UniProtKB-UniRule"/>
</dbReference>
<dbReference type="CDD" id="cd00378">
    <property type="entry name" value="SHMT"/>
    <property type="match status" value="1"/>
</dbReference>
<dbReference type="FunFam" id="3.40.640.10:FF:000001">
    <property type="entry name" value="Serine hydroxymethyltransferase"/>
    <property type="match status" value="1"/>
</dbReference>
<dbReference type="FunFam" id="3.90.1150.10:FF:000003">
    <property type="entry name" value="Serine hydroxymethyltransferase"/>
    <property type="match status" value="1"/>
</dbReference>
<dbReference type="Gene3D" id="3.90.1150.10">
    <property type="entry name" value="Aspartate Aminotransferase, domain 1"/>
    <property type="match status" value="1"/>
</dbReference>
<dbReference type="Gene3D" id="3.40.640.10">
    <property type="entry name" value="Type I PLP-dependent aspartate aminotransferase-like (Major domain)"/>
    <property type="match status" value="1"/>
</dbReference>
<dbReference type="HAMAP" id="MF_00051">
    <property type="entry name" value="SHMT"/>
    <property type="match status" value="1"/>
</dbReference>
<dbReference type="InterPro" id="IPR015424">
    <property type="entry name" value="PyrdxlP-dep_Trfase"/>
</dbReference>
<dbReference type="InterPro" id="IPR015421">
    <property type="entry name" value="PyrdxlP-dep_Trfase_major"/>
</dbReference>
<dbReference type="InterPro" id="IPR015422">
    <property type="entry name" value="PyrdxlP-dep_Trfase_small"/>
</dbReference>
<dbReference type="InterPro" id="IPR001085">
    <property type="entry name" value="Ser_HO-MeTrfase"/>
</dbReference>
<dbReference type="InterPro" id="IPR049943">
    <property type="entry name" value="Ser_HO-MeTrfase-like"/>
</dbReference>
<dbReference type="InterPro" id="IPR019798">
    <property type="entry name" value="Ser_HO-MeTrfase_PLP_BS"/>
</dbReference>
<dbReference type="InterPro" id="IPR039429">
    <property type="entry name" value="SHMT-like_dom"/>
</dbReference>
<dbReference type="NCBIfam" id="NF000586">
    <property type="entry name" value="PRK00011.1"/>
    <property type="match status" value="1"/>
</dbReference>
<dbReference type="PANTHER" id="PTHR11680">
    <property type="entry name" value="SERINE HYDROXYMETHYLTRANSFERASE"/>
    <property type="match status" value="1"/>
</dbReference>
<dbReference type="PANTHER" id="PTHR11680:SF50">
    <property type="entry name" value="SERINE HYDROXYMETHYLTRANSFERASE"/>
    <property type="match status" value="1"/>
</dbReference>
<dbReference type="Pfam" id="PF00464">
    <property type="entry name" value="SHMT"/>
    <property type="match status" value="1"/>
</dbReference>
<dbReference type="PIRSF" id="PIRSF000412">
    <property type="entry name" value="SHMT"/>
    <property type="match status" value="1"/>
</dbReference>
<dbReference type="SUPFAM" id="SSF53383">
    <property type="entry name" value="PLP-dependent transferases"/>
    <property type="match status" value="1"/>
</dbReference>
<dbReference type="PROSITE" id="PS00096">
    <property type="entry name" value="SHMT"/>
    <property type="match status" value="1"/>
</dbReference>
<proteinExistence type="inferred from homology"/>
<gene>
    <name evidence="1" type="primary">glyA</name>
    <name type="ordered locus">E2348C_2828</name>
</gene>
<keyword id="KW-0007">Acetylation</keyword>
<keyword id="KW-0028">Amino-acid biosynthesis</keyword>
<keyword id="KW-0963">Cytoplasm</keyword>
<keyword id="KW-0554">One-carbon metabolism</keyword>
<keyword id="KW-0663">Pyridoxal phosphate</keyword>
<keyword id="KW-1185">Reference proteome</keyword>
<keyword id="KW-0808">Transferase</keyword>
<reference key="1">
    <citation type="journal article" date="2009" name="J. Bacteriol.">
        <title>Complete genome sequence and comparative genome analysis of enteropathogenic Escherichia coli O127:H6 strain E2348/69.</title>
        <authorList>
            <person name="Iguchi A."/>
            <person name="Thomson N.R."/>
            <person name="Ogura Y."/>
            <person name="Saunders D."/>
            <person name="Ooka T."/>
            <person name="Henderson I.R."/>
            <person name="Harris D."/>
            <person name="Asadulghani M."/>
            <person name="Kurokawa K."/>
            <person name="Dean P."/>
            <person name="Kenny B."/>
            <person name="Quail M.A."/>
            <person name="Thurston S."/>
            <person name="Dougan G."/>
            <person name="Hayashi T."/>
            <person name="Parkhill J."/>
            <person name="Frankel G."/>
        </authorList>
    </citation>
    <scope>NUCLEOTIDE SEQUENCE [LARGE SCALE GENOMIC DNA]</scope>
    <source>
        <strain>E2348/69 / EPEC</strain>
    </source>
</reference>
<sequence>MLKREMNIADYDAELWQAMEQEKVRQEEHIELIASENYTSPRVMQAQGSQLTNKYAEGYPGKRYYGGCEYVDIVEQLAIDRAKELFGADYANVQPHSGSQANFAVYTALLEPGDTVLGMNLAHGGHLTHGSPVNFSGKLYNIVPYGIDATGHIDYADLEKQAKEHKPKMIIGGFSAYSGVVDWAKMREIADSIGAYLFVDMAHVAGLVAAGVYPNPVPHAHVVTTTTHKTLAGPRGGLILAKGGSEELYKKLNSAVFPGGQGGPLMHVIAGKAVALKEAMEPEFKTYQQQVAKNAKAMVEVFLERGYKVVSGGTDNHLFLVDLVDKNLTGKEADAALGRANITVNKNSVPNDPKSPFVTSGIRVGTPAITRRGFKEAEAKELAGWMCDVLDSINDEAVIERIKGKVLDICARYPVYA</sequence>
<evidence type="ECO:0000255" key="1">
    <source>
        <dbReference type="HAMAP-Rule" id="MF_00051"/>
    </source>
</evidence>
<accession>B7UGZ1</accession>
<name>GLYA_ECO27</name>
<feature type="chain" id="PRO_1000195446" description="Serine hydroxymethyltransferase">
    <location>
        <begin position="1"/>
        <end position="417"/>
    </location>
</feature>
<feature type="binding site" evidence="1">
    <location>
        <position position="121"/>
    </location>
    <ligand>
        <name>(6S)-5,6,7,8-tetrahydrofolate</name>
        <dbReference type="ChEBI" id="CHEBI:57453"/>
    </ligand>
</feature>
<feature type="binding site" evidence="1">
    <location>
        <begin position="125"/>
        <end position="127"/>
    </location>
    <ligand>
        <name>(6S)-5,6,7,8-tetrahydrofolate</name>
        <dbReference type="ChEBI" id="CHEBI:57453"/>
    </ligand>
</feature>
<feature type="binding site" evidence="1">
    <location>
        <begin position="355"/>
        <end position="357"/>
    </location>
    <ligand>
        <name>(6S)-5,6,7,8-tetrahydrofolate</name>
        <dbReference type="ChEBI" id="CHEBI:57453"/>
    </ligand>
</feature>
<feature type="site" description="Plays an important role in substrate specificity" evidence="1">
    <location>
        <position position="228"/>
    </location>
</feature>
<feature type="modified residue" description="N6-acetyllysine" evidence="1">
    <location>
        <position position="54"/>
    </location>
</feature>
<feature type="modified residue" description="N6-(pyridoxal phosphate)lysine" evidence="1">
    <location>
        <position position="229"/>
    </location>
</feature>
<feature type="modified residue" description="N6-acetyllysine" evidence="1">
    <location>
        <position position="250"/>
    </location>
</feature>
<feature type="modified residue" description="N6-acetyllysine" evidence="1">
    <location>
        <position position="285"/>
    </location>
</feature>
<feature type="modified residue" description="N6-acetyllysine" evidence="1">
    <location>
        <position position="354"/>
    </location>
</feature>
<feature type="modified residue" description="N6-acetyllysine" evidence="1">
    <location>
        <position position="375"/>
    </location>
</feature>
<organism>
    <name type="scientific">Escherichia coli O127:H6 (strain E2348/69 / EPEC)</name>
    <dbReference type="NCBI Taxonomy" id="574521"/>
    <lineage>
        <taxon>Bacteria</taxon>
        <taxon>Pseudomonadati</taxon>
        <taxon>Pseudomonadota</taxon>
        <taxon>Gammaproteobacteria</taxon>
        <taxon>Enterobacterales</taxon>
        <taxon>Enterobacteriaceae</taxon>
        <taxon>Escherichia</taxon>
    </lineage>
</organism>